<keyword id="KW-0067">ATP-binding</keyword>
<keyword id="KW-0143">Chaperone</keyword>
<keyword id="KW-0963">Cytoplasm</keyword>
<keyword id="KW-0413">Isomerase</keyword>
<keyword id="KW-0547">Nucleotide-binding</keyword>
<keyword id="KW-0346">Stress response</keyword>
<evidence type="ECO:0000255" key="1">
    <source>
        <dbReference type="HAMAP-Rule" id="MF_00600"/>
    </source>
</evidence>
<evidence type="ECO:0000305" key="2"/>
<sequence length="120" mass="12311">PYEKIGAELVKEVAKKTDDVAGDGTTTATVLAQALVKEGLRNVAAGANPLGLKRGIEKAVEKVTQTLLSSAKDVETKEQIAATAGISAGDQSIGDLIAEAMDKVGNEGVITVEESNTFGL</sequence>
<comment type="function">
    <text evidence="1">Together with its co-chaperonin GroES, plays an essential role in assisting protein folding. The GroEL-GroES system forms a nano-cage that allows encapsulation of the non-native substrate proteins and provides a physical environment optimized to promote and accelerate protein folding.</text>
</comment>
<comment type="catalytic activity">
    <reaction evidence="1">
        <text>ATP + H2O + a folded polypeptide = ADP + phosphate + an unfolded polypeptide.</text>
        <dbReference type="EC" id="5.6.1.7"/>
    </reaction>
</comment>
<comment type="subunit">
    <text evidence="1">Forms a cylinder of 14 subunits composed of two heptameric rings stacked back-to-back. Interacts with the co-chaperonin GroES.</text>
</comment>
<comment type="subcellular location">
    <subcellularLocation>
        <location evidence="1">Cytoplasm</location>
    </subcellularLocation>
</comment>
<comment type="similarity">
    <text evidence="1 2">Belongs to the chaperonin (HSP60) family.</text>
</comment>
<gene>
    <name evidence="1" type="primary">groEL</name>
    <name evidence="1" type="synonym">groL</name>
    <name type="synonym">mopA</name>
</gene>
<reference key="1">
    <citation type="journal article" date="1995" name="Arch. Pathol. Lab. Med.">
        <title>Rapid Mycobacterium species assignment and unambiguous identification of mutations associated with antimicrobial resistance in Mycobacterium tuberculosis by automated DNA sequencing.</title>
        <authorList>
            <person name="Kapur V."/>
            <person name="Li L.L."/>
            <person name="Hamrick M.R."/>
            <person name="Plikaytis B.B."/>
            <person name="Shinnick T.M."/>
            <person name="Telenti A."/>
            <person name="Jacobs W.R. Jr."/>
            <person name="Banerjee A."/>
            <person name="Cole S."/>
            <person name="Yuen K.Y."/>
            <person name="Clarridge J.E."/>
            <person name="Kreiswirth B.N."/>
            <person name="Musser J.M."/>
        </authorList>
    </citation>
    <scope>NUCLEOTIDE SEQUENCE [GENOMIC DNA]</scope>
    <source>
        <strain>213</strain>
    </source>
</reference>
<protein>
    <recommendedName>
        <fullName evidence="1">Chaperonin GroEL</fullName>
        <ecNumber evidence="1">5.6.1.7</ecNumber>
    </recommendedName>
    <alternativeName>
        <fullName evidence="1">60 kDa chaperonin</fullName>
    </alternativeName>
    <alternativeName>
        <fullName>65 kDa heat shock protein</fullName>
    </alternativeName>
    <alternativeName>
        <fullName evidence="1">Chaperonin-60</fullName>
        <shortName evidence="1">Cpn60</shortName>
    </alternativeName>
</protein>
<organism>
    <name type="scientific">Mycobacterium asiaticum</name>
    <dbReference type="NCBI Taxonomy" id="1790"/>
    <lineage>
        <taxon>Bacteria</taxon>
        <taxon>Bacillati</taxon>
        <taxon>Actinomycetota</taxon>
        <taxon>Actinomycetes</taxon>
        <taxon>Mycobacteriales</taxon>
        <taxon>Mycobacteriaceae</taxon>
        <taxon>Mycobacterium</taxon>
    </lineage>
</organism>
<dbReference type="EC" id="5.6.1.7" evidence="1"/>
<dbReference type="EMBL" id="U17921">
    <property type="protein sequence ID" value="AAB39041.1"/>
    <property type="molecule type" value="Genomic_DNA"/>
</dbReference>
<dbReference type="SMR" id="Q48884"/>
<dbReference type="STRING" id="1790.A5645_21460"/>
<dbReference type="eggNOG" id="COG0459">
    <property type="taxonomic scope" value="Bacteria"/>
</dbReference>
<dbReference type="GO" id="GO:0005737">
    <property type="term" value="C:cytoplasm"/>
    <property type="evidence" value="ECO:0007669"/>
    <property type="project" value="UniProtKB-SubCell"/>
</dbReference>
<dbReference type="GO" id="GO:0005524">
    <property type="term" value="F:ATP binding"/>
    <property type="evidence" value="ECO:0007669"/>
    <property type="project" value="UniProtKB-KW"/>
</dbReference>
<dbReference type="GO" id="GO:0140662">
    <property type="term" value="F:ATP-dependent protein folding chaperone"/>
    <property type="evidence" value="ECO:0007669"/>
    <property type="project" value="InterPro"/>
</dbReference>
<dbReference type="GO" id="GO:0016853">
    <property type="term" value="F:isomerase activity"/>
    <property type="evidence" value="ECO:0007669"/>
    <property type="project" value="UniProtKB-KW"/>
</dbReference>
<dbReference type="GO" id="GO:0042026">
    <property type="term" value="P:protein refolding"/>
    <property type="evidence" value="ECO:0007669"/>
    <property type="project" value="InterPro"/>
</dbReference>
<dbReference type="Gene3D" id="1.10.560.10">
    <property type="entry name" value="GroEL-like equatorial domain"/>
    <property type="match status" value="1"/>
</dbReference>
<dbReference type="Gene3D" id="3.30.260.10">
    <property type="entry name" value="TCP-1-like chaperonin intermediate domain"/>
    <property type="match status" value="1"/>
</dbReference>
<dbReference type="InterPro" id="IPR001844">
    <property type="entry name" value="Cpn60/GroEL"/>
</dbReference>
<dbReference type="InterPro" id="IPR002423">
    <property type="entry name" value="Cpn60/GroEL/TCP-1"/>
</dbReference>
<dbReference type="InterPro" id="IPR027413">
    <property type="entry name" value="GROEL-like_equatorial_sf"/>
</dbReference>
<dbReference type="InterPro" id="IPR027410">
    <property type="entry name" value="TCP-1-like_intermed_sf"/>
</dbReference>
<dbReference type="PANTHER" id="PTHR45633">
    <property type="entry name" value="60 KDA HEAT SHOCK PROTEIN, MITOCHONDRIAL"/>
    <property type="match status" value="1"/>
</dbReference>
<dbReference type="Pfam" id="PF00118">
    <property type="entry name" value="Cpn60_TCP1"/>
    <property type="match status" value="1"/>
</dbReference>
<dbReference type="SUPFAM" id="SSF48592">
    <property type="entry name" value="GroEL equatorial domain-like"/>
    <property type="match status" value="1"/>
</dbReference>
<accession>Q48884</accession>
<name>CH60_MYCAS</name>
<feature type="chain" id="PRO_0000063421" description="Chaperonin GroEL">
    <location>
        <begin position="1" status="less than"/>
        <end position="120" status="greater than"/>
    </location>
</feature>
<feature type="binding site" evidence="1">
    <location>
        <begin position="23"/>
        <end position="27"/>
    </location>
    <ligand>
        <name>ATP</name>
        <dbReference type="ChEBI" id="CHEBI:30616"/>
    </ligand>
</feature>
<feature type="non-terminal residue">
    <location>
        <position position="1"/>
    </location>
</feature>
<feature type="non-terminal residue">
    <location>
        <position position="120"/>
    </location>
</feature>
<proteinExistence type="inferred from homology"/>